<protein>
    <recommendedName>
        <fullName>TATA element modulatory factor</fullName>
        <shortName>TMF</shortName>
    </recommendedName>
    <alternativeName>
        <fullName>Androgen receptor coactivator 160 kDa protein</fullName>
    </alternativeName>
    <alternativeName>
        <fullName>Androgen receptor-associated protein of 160 kDa</fullName>
    </alternativeName>
</protein>
<name>TMF1_HUMAN</name>
<keyword id="KW-0025">Alternative splicing</keyword>
<keyword id="KW-0175">Coiled coil</keyword>
<keyword id="KW-0963">Cytoplasm</keyword>
<keyword id="KW-0238">DNA-binding</keyword>
<keyword id="KW-0333">Golgi apparatus</keyword>
<keyword id="KW-0472">Membrane</keyword>
<keyword id="KW-0539">Nucleus</keyword>
<keyword id="KW-0597">Phosphoprotein</keyword>
<keyword id="KW-1267">Proteomics identification</keyword>
<keyword id="KW-1185">Reference proteome</keyword>
<keyword id="KW-0678">Repressor</keyword>
<keyword id="KW-0804">Transcription</keyword>
<keyword id="KW-0805">Transcription regulation</keyword>
<evidence type="ECO:0000250" key="1"/>
<evidence type="ECO:0000250" key="2">
    <source>
        <dbReference type="UniProtKB" id="B9EKI3"/>
    </source>
</evidence>
<evidence type="ECO:0000255" key="3"/>
<evidence type="ECO:0000256" key="4">
    <source>
        <dbReference type="SAM" id="MobiDB-lite"/>
    </source>
</evidence>
<evidence type="ECO:0000269" key="5">
    <source>
    </source>
</evidence>
<evidence type="ECO:0000269" key="6">
    <source>
    </source>
</evidence>
<evidence type="ECO:0000269" key="7">
    <source>
    </source>
</evidence>
<evidence type="ECO:0000269" key="8">
    <source>
    </source>
</evidence>
<evidence type="ECO:0000269" key="9">
    <source>
    </source>
</evidence>
<evidence type="ECO:0000303" key="10">
    <source>
    </source>
</evidence>
<evidence type="ECO:0000305" key="11"/>
<evidence type="ECO:0007744" key="12">
    <source>
    </source>
</evidence>
<evidence type="ECO:0007744" key="13">
    <source>
    </source>
</evidence>
<evidence type="ECO:0007744" key="14">
    <source>
    </source>
</evidence>
<evidence type="ECO:0007744" key="15">
    <source>
    </source>
</evidence>
<evidence type="ECO:0007744" key="16">
    <source>
    </source>
</evidence>
<evidence type="ECO:0007744" key="17">
    <source>
    </source>
</evidence>
<organism>
    <name type="scientific">Homo sapiens</name>
    <name type="common">Human</name>
    <dbReference type="NCBI Taxonomy" id="9606"/>
    <lineage>
        <taxon>Eukaryota</taxon>
        <taxon>Metazoa</taxon>
        <taxon>Chordata</taxon>
        <taxon>Craniata</taxon>
        <taxon>Vertebrata</taxon>
        <taxon>Euteleostomi</taxon>
        <taxon>Mammalia</taxon>
        <taxon>Eutheria</taxon>
        <taxon>Euarchontoglires</taxon>
        <taxon>Primates</taxon>
        <taxon>Haplorrhini</taxon>
        <taxon>Catarrhini</taxon>
        <taxon>Hominidae</taxon>
        <taxon>Homo</taxon>
    </lineage>
</organism>
<gene>
    <name type="primary">TMF1</name>
    <name type="synonym">ARA160</name>
</gene>
<sequence>MSWFNASQLSSFAKQALSQAQKSIDRVLDIQEEEPSIWAETIPYGEPGISSPVSGGWDTSTWGLKSNTEPQSPPIASPKAITKPVRRTVVDESENFFSAFLSPTDVQTIQKSPVVSKPPAKSQRPEEEVKSSLHESLHIGQSRTPETTESQVKDSSLCVSGETLAAGTSSPKTEGKHEETVNKESDMKVPTVSLKVSESVIDVKTTMESISNTSTQSLTAETKDIALEPKEQKHEDRQSNTPSPPVSTFSSGTSTTSDIEVLDHESVISESSASSRQETTDSKSSLHLMQTSFQLLSASACPEYNRLDDFQKLTESCCSSDAFERIDSFSVQSLDSRSVSEINSDDELSGKGYALVPIIVNSSTPKSKTVESAEGKSEEVNETLVIPTEEAEMEESGRSATPVNCEQPDILVSSTPINEGQTVLDKVAEQCEPAESQPEALSEKEDVCKTVEFLNEKLEKREAQLLSLSKEKALLEEAFDNLKDEMFRVKEESSSISSLKDEFTQRIAEAEKKVQLACKERDAAKKEIKNIKEELATRLNSSETADLLKEKDEQIRGLMEEGEKLSKQQLHNSNIIKKLRAKDKENENMVAKLNKKVKELEEELQHLKQVLDGKEEVEKQHRENIKKLNSMVERQEKDLGRLQVDMDELEEKNRSIQAALDSAYKELTDLHKANAAKDSEAQEAALSREMKAKEELSAALEKAQEEARQQQETLAIQVGDLRLALQRTEQAAARKEDYLRHEIGELQQRLQEAENRNQELSQSVSSTTRPLLRQIENLQATLGSQTSSWEKLEKNLSDRLGESQTLLAAAVERERAATEELLANKIQMSSMESQNSLLRQENSRFQAQLESEKNRLCKLEDENNRYQVELENLKDEYVRTLEETRKEKTLLNSQLEMERMKVEQERKKAIFTQETIKEKERKPFSVSSTPTMSRSSSISGVDMAGLQTSFLSQDESHDHSFGPMPISANGSNLYDAVRMGAGSSIIENLQSQLKLREGEITHLQLEIGNLEKTRSIMAEELVKLTNQNDELEEKVKEIPKLRTQLRDLDQRYNTILQMYGEKAEEAEELRLDLEDVKNMYKTQIDELLRQSLS</sequence>
<comment type="function">
    <text evidence="5 7 8 9">Potential coactivator of the androgen receptor. Mediates STAT3 degradation. May play critical roles in two RAB6-dependent retrograde transport processes: one from endosomes to the Golgi and the other from the Golgi to the ER. This protein binds the HIV-1 TATA element and inhibits transcriptional activation by the TATA-binding protein (TBP).</text>
</comment>
<comment type="subunit">
    <text evidence="1 6 8 9">Interacts with TRNP1; may regulate TRNP1 proteasomal degradation (By similarity). Component of the SNF/SWI transcription factor complexes. Interacts with RAB6A. Interacts with STAT3 and FER. Interacts with TCEB1.</text>
</comment>
<comment type="interaction">
    <interactant intactId="EBI-949763">
        <id>P82094</id>
    </interactant>
    <interactant intactId="EBI-11522780">
        <id>Q96DZ9-2</id>
        <label>CMTM5</label>
    </interactant>
    <organismsDiffer>false</organismsDiffer>
    <experiments>3</experiments>
</comment>
<comment type="interaction">
    <interactant intactId="EBI-949763">
        <id>P82094</id>
    </interactant>
    <interactant intactId="EBI-493507">
        <id>P04150</id>
        <label>NR3C1</label>
    </interactant>
    <organismsDiffer>false</organismsDiffer>
    <experiments>3</experiments>
</comment>
<comment type="subcellular location">
    <subcellularLocation>
        <location>Cytoplasm</location>
    </subcellularLocation>
    <subcellularLocation>
        <location>Nucleus</location>
    </subcellularLocation>
    <subcellularLocation>
        <location>Golgi apparatus membrane</location>
    </subcellularLocation>
    <text>Concentrated at the budding structures localized at the tips of cisternae.</text>
</comment>
<comment type="alternative products">
    <event type="alternative splicing"/>
    <isoform>
        <id>P82094-1</id>
        <name>1</name>
        <sequence type="displayed"/>
    </isoform>
    <isoform>
        <id>P82094-2</id>
        <name>2</name>
        <sequence type="described" ref="VSP_037411"/>
    </isoform>
</comment>
<comment type="induction">
    <text evidence="8">Down-regulated in malignant brain tumors.</text>
</comment>
<comment type="domain">
    <text>The Elongin BC complex binding domain is also known as BC-box with the consensus [APST]-L-x(3)-C-x(3)-[AILV].</text>
</comment>
<comment type="PTM">
    <text evidence="1">Phosphorylated by FER.</text>
</comment>
<comment type="sequence caution" evidence="11">
    <conflict type="frameshift">
        <sequence resource="EMBL-CDS" id="AAD54608"/>
    </conflict>
</comment>
<comment type="sequence caution" evidence="11">
    <conflict type="erroneous initiation">
        <sequence resource="EMBL-CDS" id="BAD92346"/>
    </conflict>
</comment>
<dbReference type="EMBL" id="L01042">
    <property type="protein sequence ID" value="AAD54608.1"/>
    <property type="status" value="ALT_FRAME"/>
    <property type="molecule type" value="mRNA"/>
</dbReference>
<dbReference type="EMBL" id="AB209109">
    <property type="protein sequence ID" value="BAD92346.1"/>
    <property type="status" value="ALT_INIT"/>
    <property type="molecule type" value="mRNA"/>
</dbReference>
<dbReference type="EMBL" id="AC109587">
    <property type="status" value="NOT_ANNOTATED_CDS"/>
    <property type="molecule type" value="Genomic_DNA"/>
</dbReference>
<dbReference type="EMBL" id="CH471055">
    <property type="protein sequence ID" value="EAW65468.1"/>
    <property type="molecule type" value="Genomic_DNA"/>
</dbReference>
<dbReference type="EMBL" id="BC117418">
    <property type="protein sequence ID" value="AAI17419.1"/>
    <property type="molecule type" value="mRNA"/>
</dbReference>
<dbReference type="EMBL" id="BC126123">
    <property type="protein sequence ID" value="AAI26124.1"/>
    <property type="molecule type" value="mRNA"/>
</dbReference>
<dbReference type="EMBL" id="BC143840">
    <property type="protein sequence ID" value="AAI43841.1"/>
    <property type="molecule type" value="mRNA"/>
</dbReference>
<dbReference type="CCDS" id="CCDS43105.1">
    <molecule id="P82094-1"/>
</dbReference>
<dbReference type="CCDS" id="CCDS87105.1">
    <molecule id="P82094-2"/>
</dbReference>
<dbReference type="PIR" id="A47212">
    <property type="entry name" value="A47212"/>
</dbReference>
<dbReference type="RefSeq" id="NP_001350808.1">
    <molecule id="P82094-2"/>
    <property type="nucleotide sequence ID" value="NM_001363879.1"/>
</dbReference>
<dbReference type="RefSeq" id="NP_009045.2">
    <molecule id="P82094-1"/>
    <property type="nucleotide sequence ID" value="NM_007114.3"/>
</dbReference>
<dbReference type="RefSeq" id="XP_011532358.1">
    <property type="nucleotide sequence ID" value="XM_011534056.2"/>
</dbReference>
<dbReference type="SMR" id="P82094"/>
<dbReference type="BioGRID" id="112965">
    <property type="interactions" value="89"/>
</dbReference>
<dbReference type="CORUM" id="P82094"/>
<dbReference type="DIP" id="DIP-5933N"/>
<dbReference type="FunCoup" id="P82094">
    <property type="interactions" value="2908"/>
</dbReference>
<dbReference type="IntAct" id="P82094">
    <property type="interactions" value="37"/>
</dbReference>
<dbReference type="MINT" id="P82094"/>
<dbReference type="STRING" id="9606.ENSP00000494067"/>
<dbReference type="GlyGen" id="P82094">
    <property type="glycosylation" value="1 site, 1 O-linked glycan (1 site)"/>
</dbReference>
<dbReference type="iPTMnet" id="P82094"/>
<dbReference type="MetOSite" id="P82094"/>
<dbReference type="PhosphoSitePlus" id="P82094"/>
<dbReference type="BioMuta" id="TMF1"/>
<dbReference type="DMDM" id="218511858"/>
<dbReference type="jPOST" id="P82094"/>
<dbReference type="MassIVE" id="P82094"/>
<dbReference type="PaxDb" id="9606-ENSP00000381567"/>
<dbReference type="PeptideAtlas" id="P82094"/>
<dbReference type="ProteomicsDB" id="57702">
    <molecule id="P82094-1"/>
</dbReference>
<dbReference type="ProteomicsDB" id="57703">
    <molecule id="P82094-2"/>
</dbReference>
<dbReference type="Pumba" id="P82094"/>
<dbReference type="Antibodypedia" id="1796">
    <property type="antibodies" value="103 antibodies from 24 providers"/>
</dbReference>
<dbReference type="DNASU" id="7110"/>
<dbReference type="Ensembl" id="ENST00000398559.7">
    <molecule id="P82094-1"/>
    <property type="protein sequence ID" value="ENSP00000381567.2"/>
    <property type="gene ID" value="ENSG00000144747.17"/>
</dbReference>
<dbReference type="Ensembl" id="ENST00000646708.1">
    <molecule id="P82094-2"/>
    <property type="protein sequence ID" value="ENSP00000494067.1"/>
    <property type="gene ID" value="ENSG00000144747.17"/>
</dbReference>
<dbReference type="GeneID" id="7110"/>
<dbReference type="KEGG" id="hsa:7110"/>
<dbReference type="MANE-Select" id="ENST00000398559.7">
    <property type="protein sequence ID" value="ENSP00000381567.2"/>
    <property type="RefSeq nucleotide sequence ID" value="NM_007114.3"/>
    <property type="RefSeq protein sequence ID" value="NP_009045.2"/>
</dbReference>
<dbReference type="UCSC" id="uc003dnn.4">
    <molecule id="P82094-1"/>
    <property type="organism name" value="human"/>
</dbReference>
<dbReference type="AGR" id="HGNC:11870"/>
<dbReference type="CTD" id="7110"/>
<dbReference type="DisGeNET" id="7110"/>
<dbReference type="GeneCards" id="TMF1"/>
<dbReference type="HGNC" id="HGNC:11870">
    <property type="gene designation" value="TMF1"/>
</dbReference>
<dbReference type="HPA" id="ENSG00000144747">
    <property type="expression patterns" value="Low tissue specificity"/>
</dbReference>
<dbReference type="MIM" id="601126">
    <property type="type" value="gene"/>
</dbReference>
<dbReference type="neXtProt" id="NX_P82094"/>
<dbReference type="OpenTargets" id="ENSG00000144747"/>
<dbReference type="PharmGKB" id="PA36571"/>
<dbReference type="VEuPathDB" id="HostDB:ENSG00000144747"/>
<dbReference type="eggNOG" id="KOG4673">
    <property type="taxonomic scope" value="Eukaryota"/>
</dbReference>
<dbReference type="GeneTree" id="ENSGT00390000010697"/>
<dbReference type="HOGENOM" id="CLU_009915_0_0_1"/>
<dbReference type="InParanoid" id="P82094"/>
<dbReference type="OMA" id="EEMHGYI"/>
<dbReference type="OrthoDB" id="74178at2759"/>
<dbReference type="PAN-GO" id="P82094">
    <property type="GO annotations" value="2 GO annotations based on evolutionary models"/>
</dbReference>
<dbReference type="PhylomeDB" id="P82094"/>
<dbReference type="TreeFam" id="TF329420"/>
<dbReference type="PathwayCommons" id="P82094"/>
<dbReference type="Reactome" id="R-HSA-6811440">
    <property type="pathway name" value="Retrograde transport at the Trans-Golgi-Network"/>
</dbReference>
<dbReference type="SignaLink" id="P82094"/>
<dbReference type="BioGRID-ORCS" id="7110">
    <property type="hits" value="9 hits in 1159 CRISPR screens"/>
</dbReference>
<dbReference type="ChiTaRS" id="TMF1">
    <property type="organism name" value="human"/>
</dbReference>
<dbReference type="GeneWiki" id="TMF1"/>
<dbReference type="GenomeRNAi" id="7110"/>
<dbReference type="Pharos" id="P82094">
    <property type="development level" value="Tbio"/>
</dbReference>
<dbReference type="PRO" id="PR:P82094"/>
<dbReference type="Proteomes" id="UP000005640">
    <property type="component" value="Chromosome 3"/>
</dbReference>
<dbReference type="RNAct" id="P82094">
    <property type="molecule type" value="protein"/>
</dbReference>
<dbReference type="Bgee" id="ENSG00000144747">
    <property type="expression patterns" value="Expressed in calcaneal tendon and 196 other cell types or tissues"/>
</dbReference>
<dbReference type="ExpressionAtlas" id="P82094">
    <property type="expression patterns" value="baseline and differential"/>
</dbReference>
<dbReference type="GO" id="GO:0005829">
    <property type="term" value="C:cytosol"/>
    <property type="evidence" value="ECO:0000304"/>
    <property type="project" value="Reactome"/>
</dbReference>
<dbReference type="GO" id="GO:0005783">
    <property type="term" value="C:endoplasmic reticulum"/>
    <property type="evidence" value="ECO:0000318"/>
    <property type="project" value="GO_Central"/>
</dbReference>
<dbReference type="GO" id="GO:0005794">
    <property type="term" value="C:Golgi apparatus"/>
    <property type="evidence" value="ECO:0000314"/>
    <property type="project" value="HPA"/>
</dbReference>
<dbReference type="GO" id="GO:0000139">
    <property type="term" value="C:Golgi membrane"/>
    <property type="evidence" value="ECO:0007669"/>
    <property type="project" value="UniProtKB-SubCell"/>
</dbReference>
<dbReference type="GO" id="GO:0005634">
    <property type="term" value="C:nucleus"/>
    <property type="evidence" value="ECO:0007669"/>
    <property type="project" value="UniProtKB-SubCell"/>
</dbReference>
<dbReference type="GO" id="GO:0003677">
    <property type="term" value="F:DNA binding"/>
    <property type="evidence" value="ECO:0007669"/>
    <property type="project" value="UniProtKB-KW"/>
</dbReference>
<dbReference type="GO" id="GO:0050681">
    <property type="term" value="F:nuclear androgen receptor binding"/>
    <property type="evidence" value="ECO:0000353"/>
    <property type="project" value="ARUK-UCL"/>
</dbReference>
<dbReference type="GO" id="GO:0003713">
    <property type="term" value="F:transcription coactivator activity"/>
    <property type="evidence" value="ECO:0000314"/>
    <property type="project" value="ARUK-UCL"/>
</dbReference>
<dbReference type="GO" id="GO:0001675">
    <property type="term" value="P:acrosome assembly"/>
    <property type="evidence" value="ECO:0007669"/>
    <property type="project" value="Ensembl"/>
</dbReference>
<dbReference type="GO" id="GO:0030521">
    <property type="term" value="P:androgen receptor signaling pathway"/>
    <property type="evidence" value="ECO:0000314"/>
    <property type="project" value="ARUK-UCL"/>
</dbReference>
<dbReference type="GO" id="GO:0042742">
    <property type="term" value="P:defense response to bacterium"/>
    <property type="evidence" value="ECO:0007669"/>
    <property type="project" value="Ensembl"/>
</dbReference>
<dbReference type="GO" id="GO:1904019">
    <property type="term" value="P:epithelial cell apoptotic process"/>
    <property type="evidence" value="ECO:0007669"/>
    <property type="project" value="Ensembl"/>
</dbReference>
<dbReference type="GO" id="GO:0030317">
    <property type="term" value="P:flagellated sperm motility"/>
    <property type="evidence" value="ECO:0007669"/>
    <property type="project" value="Ensembl"/>
</dbReference>
<dbReference type="GO" id="GO:0033327">
    <property type="term" value="P:Leydig cell differentiation"/>
    <property type="evidence" value="ECO:0007669"/>
    <property type="project" value="Ensembl"/>
</dbReference>
<dbReference type="GO" id="GO:0032275">
    <property type="term" value="P:luteinizing hormone secretion"/>
    <property type="evidence" value="ECO:0007669"/>
    <property type="project" value="Ensembl"/>
</dbReference>
<dbReference type="GO" id="GO:1904036">
    <property type="term" value="P:negative regulation of epithelial cell apoptotic process"/>
    <property type="evidence" value="ECO:0007669"/>
    <property type="project" value="Ensembl"/>
</dbReference>
<dbReference type="GO" id="GO:0010629">
    <property type="term" value="P:negative regulation of gene expression"/>
    <property type="evidence" value="ECO:0007669"/>
    <property type="project" value="Ensembl"/>
</dbReference>
<dbReference type="GO" id="GO:0001819">
    <property type="term" value="P:positive regulation of cytokine production"/>
    <property type="evidence" value="ECO:0007669"/>
    <property type="project" value="Ensembl"/>
</dbReference>
<dbReference type="GO" id="GO:2000845">
    <property type="term" value="P:positive regulation of testosterone secretion"/>
    <property type="evidence" value="ECO:0007669"/>
    <property type="project" value="Ensembl"/>
</dbReference>
<dbReference type="GO" id="GO:0045944">
    <property type="term" value="P:positive regulation of transcription by RNA polymerase II"/>
    <property type="evidence" value="ECO:0000314"/>
    <property type="project" value="ARUK-UCL"/>
</dbReference>
<dbReference type="GO" id="GO:0061136">
    <property type="term" value="P:regulation of proteasomal protein catabolic process"/>
    <property type="evidence" value="ECO:0000250"/>
    <property type="project" value="UniProtKB"/>
</dbReference>
<dbReference type="GO" id="GO:0007289">
    <property type="term" value="P:spermatid nucleus differentiation"/>
    <property type="evidence" value="ECO:0007669"/>
    <property type="project" value="Ensembl"/>
</dbReference>
<dbReference type="InterPro" id="IPR052602">
    <property type="entry name" value="Growth_transcription_reg"/>
</dbReference>
<dbReference type="InterPro" id="IPR022092">
    <property type="entry name" value="TMF_DNA-bd"/>
</dbReference>
<dbReference type="InterPro" id="IPR022091">
    <property type="entry name" value="TMF_TATA-bd"/>
</dbReference>
<dbReference type="PANTHER" id="PTHR46515:SF1">
    <property type="entry name" value="TATA ELEMENT MODULATORY FACTOR"/>
    <property type="match status" value="1"/>
</dbReference>
<dbReference type="PANTHER" id="PTHR46515">
    <property type="entry name" value="TATA ELEMENT MODULATORY FACTOR TMF1"/>
    <property type="match status" value="1"/>
</dbReference>
<dbReference type="Pfam" id="PF12329">
    <property type="entry name" value="TMF_DNA_bd"/>
    <property type="match status" value="1"/>
</dbReference>
<dbReference type="Pfam" id="PF12325">
    <property type="entry name" value="TMF_TATA_bd"/>
    <property type="match status" value="1"/>
</dbReference>
<reference key="1">
    <citation type="journal article" date="1992" name="Proc. Natl. Acad. Sci. U.S.A.">
        <title>Cloning and chromosomal mapping of a human immunodeficiency virus 1 'TATA' element modulatory factor.</title>
        <authorList>
            <person name="Garcia J.A."/>
            <person name="Ou S.-H.I."/>
            <person name="Wu F."/>
            <person name="Lusis A.J."/>
            <person name="Sparkes R.S."/>
            <person name="Gaynor R.B."/>
        </authorList>
    </citation>
    <scope>NUCLEOTIDE SEQUENCE [MRNA] (ISOFORM 1)</scope>
    <scope>FUNCTION</scope>
    <source>
        <tissue>Cervix carcinoma</tissue>
    </source>
</reference>
<reference key="2">
    <citation type="journal article" date="1999" name="J. Biol. Chem.">
        <title>Isolation and characterization of ARA160 as the first androgen receptor N-terminal-associated coactivator in human prostate cells.</title>
        <authorList>
            <person name="Hsiao P.W."/>
            <person name="Chang C."/>
        </authorList>
    </citation>
    <scope>NUCLEOTIDE SEQUENCE [MRNA] (ISOFORM 1)</scope>
    <scope>FUNCTION</scope>
</reference>
<reference key="3">
    <citation type="submission" date="2005-03" db="EMBL/GenBank/DDBJ databases">
        <authorList>
            <person name="Totoki Y."/>
            <person name="Toyoda A."/>
            <person name="Takeda T."/>
            <person name="Sakaki Y."/>
            <person name="Tanaka A."/>
            <person name="Yokoyama S."/>
            <person name="Ohara O."/>
            <person name="Nagase T."/>
            <person name="Kikuno F.R."/>
        </authorList>
    </citation>
    <scope>NUCLEOTIDE SEQUENCE [LARGE SCALE MRNA] (ISOFORM 1)</scope>
    <source>
        <tissue>Brain</tissue>
    </source>
</reference>
<reference key="4">
    <citation type="journal article" date="2006" name="Nature">
        <title>The DNA sequence, annotation and analysis of human chromosome 3.</title>
        <authorList>
            <person name="Muzny D.M."/>
            <person name="Scherer S.E."/>
            <person name="Kaul R."/>
            <person name="Wang J."/>
            <person name="Yu J."/>
            <person name="Sudbrak R."/>
            <person name="Buhay C.J."/>
            <person name="Chen R."/>
            <person name="Cree A."/>
            <person name="Ding Y."/>
            <person name="Dugan-Rocha S."/>
            <person name="Gill R."/>
            <person name="Gunaratne P."/>
            <person name="Harris R.A."/>
            <person name="Hawes A.C."/>
            <person name="Hernandez J."/>
            <person name="Hodgson A.V."/>
            <person name="Hume J."/>
            <person name="Jackson A."/>
            <person name="Khan Z.M."/>
            <person name="Kovar-Smith C."/>
            <person name="Lewis L.R."/>
            <person name="Lozado R.J."/>
            <person name="Metzker M.L."/>
            <person name="Milosavljevic A."/>
            <person name="Miner G.R."/>
            <person name="Morgan M.B."/>
            <person name="Nazareth L.V."/>
            <person name="Scott G."/>
            <person name="Sodergren E."/>
            <person name="Song X.-Z."/>
            <person name="Steffen D."/>
            <person name="Wei S."/>
            <person name="Wheeler D.A."/>
            <person name="Wright M.W."/>
            <person name="Worley K.C."/>
            <person name="Yuan Y."/>
            <person name="Zhang Z."/>
            <person name="Adams C.Q."/>
            <person name="Ansari-Lari M.A."/>
            <person name="Ayele M."/>
            <person name="Brown M.J."/>
            <person name="Chen G."/>
            <person name="Chen Z."/>
            <person name="Clendenning J."/>
            <person name="Clerc-Blankenburg K.P."/>
            <person name="Chen R."/>
            <person name="Chen Z."/>
            <person name="Davis C."/>
            <person name="Delgado O."/>
            <person name="Dinh H.H."/>
            <person name="Dong W."/>
            <person name="Draper H."/>
            <person name="Ernst S."/>
            <person name="Fu G."/>
            <person name="Gonzalez-Garay M.L."/>
            <person name="Garcia D.K."/>
            <person name="Gillett W."/>
            <person name="Gu J."/>
            <person name="Hao B."/>
            <person name="Haugen E."/>
            <person name="Havlak P."/>
            <person name="He X."/>
            <person name="Hennig S."/>
            <person name="Hu S."/>
            <person name="Huang W."/>
            <person name="Jackson L.R."/>
            <person name="Jacob L.S."/>
            <person name="Kelly S.H."/>
            <person name="Kube M."/>
            <person name="Levy R."/>
            <person name="Li Z."/>
            <person name="Liu B."/>
            <person name="Liu J."/>
            <person name="Liu W."/>
            <person name="Lu J."/>
            <person name="Maheshwari M."/>
            <person name="Nguyen B.-V."/>
            <person name="Okwuonu G.O."/>
            <person name="Palmeiri A."/>
            <person name="Pasternak S."/>
            <person name="Perez L.M."/>
            <person name="Phelps K.A."/>
            <person name="Plopper F.J."/>
            <person name="Qiang B."/>
            <person name="Raymond C."/>
            <person name="Rodriguez R."/>
            <person name="Saenphimmachak C."/>
            <person name="Santibanez J."/>
            <person name="Shen H."/>
            <person name="Shen Y."/>
            <person name="Subramanian S."/>
            <person name="Tabor P.E."/>
            <person name="Verduzco D."/>
            <person name="Waldron L."/>
            <person name="Wang J."/>
            <person name="Wang J."/>
            <person name="Wang Q."/>
            <person name="Williams G.A."/>
            <person name="Wong G.K.-S."/>
            <person name="Yao Z."/>
            <person name="Zhang J."/>
            <person name="Zhang X."/>
            <person name="Zhao G."/>
            <person name="Zhou J."/>
            <person name="Zhou Y."/>
            <person name="Nelson D."/>
            <person name="Lehrach H."/>
            <person name="Reinhardt R."/>
            <person name="Naylor S.L."/>
            <person name="Yang H."/>
            <person name="Olson M."/>
            <person name="Weinstock G."/>
            <person name="Gibbs R.A."/>
        </authorList>
    </citation>
    <scope>NUCLEOTIDE SEQUENCE [LARGE SCALE GENOMIC DNA]</scope>
</reference>
<reference key="5">
    <citation type="submission" date="2005-07" db="EMBL/GenBank/DDBJ databases">
        <authorList>
            <person name="Mural R.J."/>
            <person name="Istrail S."/>
            <person name="Sutton G.G."/>
            <person name="Florea L."/>
            <person name="Halpern A.L."/>
            <person name="Mobarry C.M."/>
            <person name="Lippert R."/>
            <person name="Walenz B."/>
            <person name="Shatkay H."/>
            <person name="Dew I."/>
            <person name="Miller J.R."/>
            <person name="Flanigan M.J."/>
            <person name="Edwards N.J."/>
            <person name="Bolanos R."/>
            <person name="Fasulo D."/>
            <person name="Halldorsson B.V."/>
            <person name="Hannenhalli S."/>
            <person name="Turner R."/>
            <person name="Yooseph S."/>
            <person name="Lu F."/>
            <person name="Nusskern D.R."/>
            <person name="Shue B.C."/>
            <person name="Zheng X.H."/>
            <person name="Zhong F."/>
            <person name="Delcher A.L."/>
            <person name="Huson D.H."/>
            <person name="Kravitz S.A."/>
            <person name="Mouchard L."/>
            <person name="Reinert K."/>
            <person name="Remington K.A."/>
            <person name="Clark A.G."/>
            <person name="Waterman M.S."/>
            <person name="Eichler E.E."/>
            <person name="Adams M.D."/>
            <person name="Hunkapiller M.W."/>
            <person name="Myers E.W."/>
            <person name="Venter J.C."/>
        </authorList>
    </citation>
    <scope>NUCLEOTIDE SEQUENCE [LARGE SCALE GENOMIC DNA]</scope>
</reference>
<reference key="6">
    <citation type="journal article" date="2004" name="Genome Res.">
        <title>The status, quality, and expansion of the NIH full-length cDNA project: the Mammalian Gene Collection (MGC).</title>
        <authorList>
            <consortium name="The MGC Project Team"/>
        </authorList>
    </citation>
    <scope>NUCLEOTIDE SEQUENCE [LARGE SCALE MRNA] (ISOFORMS 1 AND 2)</scope>
    <source>
        <tissue>Brain</tissue>
    </source>
</reference>
<reference key="7">
    <citation type="journal article" date="2002" name="FEBS Lett.">
        <title>A putative nuclear receptor coactivator (TMF/ARA160) associates with hbrm/hSNF2 alpha and BRG-1/hSNF2 beta and localizes in the Golgi apparatus.</title>
        <authorList>
            <person name="Mori K."/>
            <person name="Kato H."/>
        </authorList>
    </citation>
    <scope>SUBCELLULAR LOCATION</scope>
    <scope>IDENTIFICATION IN SWI/SNF COMPLEXES</scope>
</reference>
<reference key="8">
    <citation type="journal article" date="2004" name="Oncogene">
        <title>TMF/ARA160 is a BC-box-containing protein that mediates the degradation of Stat3.</title>
        <authorList>
            <person name="Perry E."/>
            <person name="Tsruya R."/>
            <person name="Levitsky P."/>
            <person name="Pomp O."/>
            <person name="Taller M."/>
            <person name="Weisberg S."/>
            <person name="Parris W."/>
            <person name="Kulkarni S."/>
            <person name="Malovani H."/>
            <person name="Pawson T."/>
            <person name="Shpungin S."/>
            <person name="Nir U."/>
        </authorList>
    </citation>
    <scope>FUNCTION</scope>
    <scope>MUTAGENESIS OF 333-LEU--ASP-335</scope>
    <scope>INTERACTION WITH TCEB1 AND STAT3</scope>
    <scope>INDUCTION</scope>
</reference>
<reference key="9">
    <citation type="journal article" date="2007" name="Exp. Cell Res.">
        <title>Functional involvement of TMF/ARA160 in Rab6-dependent retrograde membrane traffic.</title>
        <authorList>
            <person name="Yamane J."/>
            <person name="Kubo A."/>
            <person name="Nakayama K."/>
            <person name="Yuba-Kubo A."/>
            <person name="Katsuno T."/>
            <person name="Tsukita S."/>
            <person name="Tsukita S."/>
        </authorList>
    </citation>
    <scope>FUNCTION</scope>
    <scope>SUBCELLULAR LOCATION</scope>
    <scope>INTERACTION WITH RAB6A</scope>
</reference>
<reference key="10">
    <citation type="journal article" date="2008" name="Mol. Cell">
        <title>Kinase-selective enrichment enables quantitative phosphoproteomics of the kinome across the cell cycle.</title>
        <authorList>
            <person name="Daub H."/>
            <person name="Olsen J.V."/>
            <person name="Bairlein M."/>
            <person name="Gnad F."/>
            <person name="Oppermann F.S."/>
            <person name="Korner R."/>
            <person name="Greff Z."/>
            <person name="Keri G."/>
            <person name="Stemmann O."/>
            <person name="Mann M."/>
        </authorList>
    </citation>
    <scope>IDENTIFICATION BY MASS SPECTROMETRY [LARGE SCALE ANALYSIS]</scope>
    <source>
        <tissue>Cervix carcinoma</tissue>
    </source>
</reference>
<reference key="11">
    <citation type="journal article" date="2008" name="Proc. Natl. Acad. Sci. U.S.A.">
        <title>A quantitative atlas of mitotic phosphorylation.</title>
        <authorList>
            <person name="Dephoure N."/>
            <person name="Zhou C."/>
            <person name="Villen J."/>
            <person name="Beausoleil S.A."/>
            <person name="Bakalarski C.E."/>
            <person name="Elledge S.J."/>
            <person name="Gygi S.P."/>
        </authorList>
    </citation>
    <scope>PHOSPHORYLATION [LARGE SCALE ANALYSIS] AT SER-72; SER-77; SER-112; SER-328; SER-338; SER-344 AND SER-925</scope>
    <scope>IDENTIFICATION BY MASS SPECTROMETRY [LARGE SCALE ANALYSIS]</scope>
    <source>
        <tissue>Cervix carcinoma</tissue>
    </source>
</reference>
<reference key="12">
    <citation type="journal article" date="2009" name="Anal. Chem.">
        <title>Lys-N and trypsin cover complementary parts of the phosphoproteome in a refined SCX-based approach.</title>
        <authorList>
            <person name="Gauci S."/>
            <person name="Helbig A.O."/>
            <person name="Slijper M."/>
            <person name="Krijgsveld J."/>
            <person name="Heck A.J."/>
            <person name="Mohammed S."/>
        </authorList>
    </citation>
    <scope>IDENTIFICATION BY MASS SPECTROMETRY [LARGE SCALE ANALYSIS]</scope>
</reference>
<reference key="13">
    <citation type="journal article" date="2009" name="Sci. Signal.">
        <title>Quantitative phosphoproteomic analysis of T cell receptor signaling reveals system-wide modulation of protein-protein interactions.</title>
        <authorList>
            <person name="Mayya V."/>
            <person name="Lundgren D.H."/>
            <person name="Hwang S.-I."/>
            <person name="Rezaul K."/>
            <person name="Wu L."/>
            <person name="Eng J.K."/>
            <person name="Rodionov V."/>
            <person name="Han D.K."/>
        </authorList>
    </citation>
    <scope>PHOSPHORYLATION [LARGE SCALE ANALYSIS] AT SER-77; SER-328 AND SER-344</scope>
    <scope>IDENTIFICATION BY MASS SPECTROMETRY [LARGE SCALE ANALYSIS]</scope>
    <source>
        <tissue>Leukemic T-cell</tissue>
    </source>
</reference>
<reference key="14">
    <citation type="journal article" date="2010" name="Sci. Signal.">
        <title>Quantitative phosphoproteomics reveals widespread full phosphorylation site occupancy during mitosis.</title>
        <authorList>
            <person name="Olsen J.V."/>
            <person name="Vermeulen M."/>
            <person name="Santamaria A."/>
            <person name="Kumar C."/>
            <person name="Miller M.L."/>
            <person name="Jensen L.J."/>
            <person name="Gnad F."/>
            <person name="Cox J."/>
            <person name="Jensen T.S."/>
            <person name="Nigg E.A."/>
            <person name="Brunak S."/>
            <person name="Mann M."/>
        </authorList>
    </citation>
    <scope>PHOSPHORYLATION [LARGE SCALE ANALYSIS] AT SER-217 AND SER-344</scope>
    <scope>IDENTIFICATION BY MASS SPECTROMETRY [LARGE SCALE ANALYSIS]</scope>
    <source>
        <tissue>Cervix carcinoma</tissue>
    </source>
</reference>
<reference key="15">
    <citation type="journal article" date="2011" name="BMC Syst. Biol.">
        <title>Initial characterization of the human central proteome.</title>
        <authorList>
            <person name="Burkard T.R."/>
            <person name="Planyavsky M."/>
            <person name="Kaupe I."/>
            <person name="Breitwieser F.P."/>
            <person name="Buerckstuemmer T."/>
            <person name="Bennett K.L."/>
            <person name="Superti-Furga G."/>
            <person name="Colinge J."/>
        </authorList>
    </citation>
    <scope>IDENTIFICATION BY MASS SPECTROMETRY [LARGE SCALE ANALYSIS]</scope>
</reference>
<reference key="16">
    <citation type="journal article" date="2011" name="Sci. Signal.">
        <title>System-wide temporal characterization of the proteome and phosphoproteome of human embryonic stem cell differentiation.</title>
        <authorList>
            <person name="Rigbolt K.T."/>
            <person name="Prokhorova T.A."/>
            <person name="Akimov V."/>
            <person name="Henningsen J."/>
            <person name="Johansen P.T."/>
            <person name="Kratchmarova I."/>
            <person name="Kassem M."/>
            <person name="Mann M."/>
            <person name="Olsen J.V."/>
            <person name="Blagoev B."/>
        </authorList>
    </citation>
    <scope>PHOSPHORYLATION [LARGE SCALE ANALYSIS] AT SER-344</scope>
    <scope>IDENTIFICATION BY MASS SPECTROMETRY [LARGE SCALE ANALYSIS]</scope>
</reference>
<reference key="17">
    <citation type="journal article" date="2013" name="J. Proteome Res.">
        <title>Toward a comprehensive characterization of a human cancer cell phosphoproteome.</title>
        <authorList>
            <person name="Zhou H."/>
            <person name="Di Palma S."/>
            <person name="Preisinger C."/>
            <person name="Peng M."/>
            <person name="Polat A.N."/>
            <person name="Heck A.J."/>
            <person name="Mohammed S."/>
        </authorList>
    </citation>
    <scope>PHOSPHORYLATION [LARGE SCALE ANALYSIS] AT SER-72; SER-77; SER-136; SER-199; SER-328; SER-333; SER-344; SER-542 AND SER-933</scope>
    <scope>IDENTIFICATION BY MASS SPECTROMETRY [LARGE SCALE ANALYSIS]</scope>
    <source>
        <tissue>Cervix carcinoma</tissue>
        <tissue>Erythroleukemia</tissue>
    </source>
</reference>
<reference key="18">
    <citation type="journal article" date="2014" name="J. Proteomics">
        <title>An enzyme assisted RP-RPLC approach for in-depth analysis of human liver phosphoproteome.</title>
        <authorList>
            <person name="Bian Y."/>
            <person name="Song C."/>
            <person name="Cheng K."/>
            <person name="Dong M."/>
            <person name="Wang F."/>
            <person name="Huang J."/>
            <person name="Sun D."/>
            <person name="Wang L."/>
            <person name="Ye M."/>
            <person name="Zou H."/>
        </authorList>
    </citation>
    <scope>PHOSPHORYLATION [LARGE SCALE ANALYSIS] AT SER-77; SER-328 AND SER-344</scope>
    <scope>IDENTIFICATION BY MASS SPECTROMETRY [LARGE SCALE ANALYSIS]</scope>
    <source>
        <tissue>Liver</tissue>
    </source>
</reference>
<accession>P82094</accession>
<accession>B7ZLJ2</accession>
<accession>Q17R87</accession>
<accession>Q59GK0</accession>
<feature type="chain" id="PRO_0000072589" description="TATA element modulatory factor">
    <location>
        <begin position="1"/>
        <end position="1093"/>
    </location>
</feature>
<feature type="region of interest" description="Disordered" evidence="4">
    <location>
        <begin position="38"/>
        <end position="80"/>
    </location>
</feature>
<feature type="region of interest" description="Disordered" evidence="4">
    <location>
        <begin position="108"/>
        <end position="189"/>
    </location>
</feature>
<feature type="region of interest" description="Disordered" evidence="4">
    <location>
        <begin position="229"/>
        <end position="260"/>
    </location>
</feature>
<feature type="region of interest" description="Disordered" evidence="4">
    <location>
        <begin position="266"/>
        <end position="285"/>
    </location>
</feature>
<feature type="region of interest" description="Interaction with Elongin BC complex">
    <location>
        <begin position="333"/>
        <end position="342"/>
    </location>
</feature>
<feature type="region of interest" description="Disordered" evidence="4">
    <location>
        <begin position="919"/>
        <end position="939"/>
    </location>
</feature>
<feature type="coiled-coil region" evidence="3">
    <location>
        <begin position="439"/>
        <end position="922"/>
    </location>
</feature>
<feature type="coiled-coil region" evidence="3">
    <location>
        <begin position="984"/>
        <end position="1092"/>
    </location>
</feature>
<feature type="compositionally biased region" description="Polar residues" evidence="4">
    <location>
        <begin position="51"/>
        <end position="70"/>
    </location>
</feature>
<feature type="compositionally biased region" description="Basic and acidic residues" evidence="4">
    <location>
        <begin position="123"/>
        <end position="137"/>
    </location>
</feature>
<feature type="compositionally biased region" description="Polar residues" evidence="4">
    <location>
        <begin position="139"/>
        <end position="158"/>
    </location>
</feature>
<feature type="compositionally biased region" description="Basic and acidic residues" evidence="4">
    <location>
        <begin position="173"/>
        <end position="187"/>
    </location>
</feature>
<feature type="compositionally biased region" description="Basic and acidic residues" evidence="4">
    <location>
        <begin position="229"/>
        <end position="238"/>
    </location>
</feature>
<feature type="compositionally biased region" description="Low complexity" evidence="4">
    <location>
        <begin position="246"/>
        <end position="257"/>
    </location>
</feature>
<feature type="compositionally biased region" description="Low complexity" evidence="4">
    <location>
        <begin position="925"/>
        <end position="939"/>
    </location>
</feature>
<feature type="modified residue" description="Phosphoserine" evidence="12 16">
    <location>
        <position position="72"/>
    </location>
</feature>
<feature type="modified residue" description="Phosphoserine" evidence="12 13 16 17">
    <location>
        <position position="77"/>
    </location>
</feature>
<feature type="modified residue" description="Phosphoserine" evidence="12">
    <location>
        <position position="112"/>
    </location>
</feature>
<feature type="modified residue" description="Phosphoserine" evidence="16">
    <location>
        <position position="136"/>
    </location>
</feature>
<feature type="modified residue" description="Phosphoserine" evidence="16">
    <location>
        <position position="199"/>
    </location>
</feature>
<feature type="modified residue" description="Phosphoserine" evidence="14">
    <location>
        <position position="217"/>
    </location>
</feature>
<feature type="modified residue" description="Phosphoserine" evidence="12 13 16 17">
    <location>
        <position position="328"/>
    </location>
</feature>
<feature type="modified residue" description="Phosphoserine" evidence="2">
    <location>
        <position position="330"/>
    </location>
</feature>
<feature type="modified residue" description="Phosphoserine" evidence="16">
    <location>
        <position position="333"/>
    </location>
</feature>
<feature type="modified residue" description="Phosphoserine" evidence="12">
    <location>
        <position position="338"/>
    </location>
</feature>
<feature type="modified residue" description="Phosphoserine" evidence="12 13 14 15 16 17">
    <location>
        <position position="344"/>
    </location>
</feature>
<feature type="modified residue" description="Phosphoserine" evidence="2">
    <location>
        <position position="413"/>
    </location>
</feature>
<feature type="modified residue" description="Phosphoserine" evidence="16">
    <location>
        <position position="542"/>
    </location>
</feature>
<feature type="modified residue" description="Phosphoserine" evidence="12">
    <location>
        <position position="925"/>
    </location>
</feature>
<feature type="modified residue" description="Phosphoserine" evidence="2">
    <location>
        <position position="928"/>
    </location>
</feature>
<feature type="modified residue" description="Phosphothreonine" evidence="2">
    <location>
        <position position="929"/>
    </location>
</feature>
<feature type="modified residue" description="Phosphoserine" evidence="16">
    <location>
        <position position="933"/>
    </location>
</feature>
<feature type="splice variant" id="VSP_037411" description="In isoform 2." evidence="10">
    <original>K</original>
    <variation>KVTL</variation>
    <location>
        <position position="449"/>
    </location>
</feature>
<feature type="sequence variant" id="VAR_051439" description="In dbSNP:rs35447207.">
    <original>Q</original>
    <variation>E</variation>
    <location>
        <position position="430"/>
    </location>
</feature>
<feature type="sequence variant" id="VAR_051440" description="In dbSNP:rs34428015.">
    <original>C</original>
    <variation>Y</variation>
    <location>
        <position position="448"/>
    </location>
</feature>
<feature type="sequence variant" id="VAR_051441" description="In dbSNP:rs3736422.">
    <original>Q</original>
    <variation>R</variation>
    <location>
        <position position="682"/>
    </location>
</feature>
<feature type="sequence variant" id="VAR_024284" description="In dbSNP:rs1532918.">
    <original>D</original>
    <variation>H</variation>
    <location>
        <position position="798"/>
    </location>
</feature>
<feature type="mutagenesis site" description="Strongly reduced the ubiquitination directing activity of the protein." evidence="8">
    <original>SLD</original>
    <variation>AAA</variation>
    <location>
        <begin position="333"/>
        <end position="335"/>
    </location>
</feature>
<proteinExistence type="evidence at protein level"/>